<feature type="signal peptide" evidence="2">
    <location>
        <begin position="1"/>
        <end position="22"/>
    </location>
</feature>
<feature type="propeptide" id="PRO_0000331565" evidence="2">
    <location>
        <begin position="23"/>
        <end status="unknown"/>
    </location>
</feature>
<feature type="chain" id="PRO_0000331566" description="Probable serine carboxypeptidase CPVL">
    <location>
        <begin status="unknown"/>
        <end position="478"/>
    </location>
</feature>
<feature type="active site" evidence="3">
    <location>
        <position position="206"/>
    </location>
</feature>
<feature type="active site" evidence="3">
    <location>
        <position position="390"/>
    </location>
</feature>
<feature type="active site" evidence="3">
    <location>
        <position position="450"/>
    </location>
</feature>
<feature type="glycosylation site" description="N-linked (GlcNAc...) asparagine" evidence="2">
    <location>
        <position position="83"/>
    </location>
</feature>
<feature type="glycosylation site" description="N-linked (GlcNAc...) asparagine" evidence="2">
    <location>
        <position position="134"/>
    </location>
</feature>
<feature type="glycosylation site" description="N-linked (GlcNAc...) asparagine" evidence="2">
    <location>
        <position position="309"/>
    </location>
</feature>
<feature type="glycosylation site" description="N-linked (GlcNAc...) asparagine" evidence="2">
    <location>
        <position position="350"/>
    </location>
</feature>
<gene>
    <name type="primary">CPVL</name>
</gene>
<proteinExistence type="evidence at transcript level"/>
<organism>
    <name type="scientific">Rattus norvegicus</name>
    <name type="common">Rat</name>
    <dbReference type="NCBI Taxonomy" id="10116"/>
    <lineage>
        <taxon>Eukaryota</taxon>
        <taxon>Metazoa</taxon>
        <taxon>Chordata</taxon>
        <taxon>Craniata</taxon>
        <taxon>Vertebrata</taxon>
        <taxon>Euteleostomi</taxon>
        <taxon>Mammalia</taxon>
        <taxon>Eutheria</taxon>
        <taxon>Euarchontoglires</taxon>
        <taxon>Glires</taxon>
        <taxon>Rodentia</taxon>
        <taxon>Myomorpha</taxon>
        <taxon>Muroidea</taxon>
        <taxon>Muridae</taxon>
        <taxon>Murinae</taxon>
        <taxon>Rattus</taxon>
    </lineage>
</organism>
<reference key="1">
    <citation type="journal article" date="2004" name="Genome Res.">
        <title>The status, quality, and expansion of the NIH full-length cDNA project: the Mammalian Gene Collection (MGC).</title>
        <authorList>
            <consortium name="The MGC Project Team"/>
        </authorList>
    </citation>
    <scope>NUCLEOTIDE SEQUENCE [LARGE SCALE MRNA]</scope>
    <source>
        <tissue>Testis</tissue>
    </source>
</reference>
<dbReference type="EC" id="3.4.16.-"/>
<dbReference type="EMBL" id="BC097471">
    <property type="protein sequence ID" value="AAH97471.1"/>
    <property type="molecule type" value="mRNA"/>
</dbReference>
<dbReference type="RefSeq" id="NP_001025098.1">
    <property type="nucleotide sequence ID" value="NM_001029927.1"/>
</dbReference>
<dbReference type="RefSeq" id="XP_008761137.1">
    <property type="nucleotide sequence ID" value="XM_008762915.2"/>
</dbReference>
<dbReference type="SMR" id="Q4QR71"/>
<dbReference type="FunCoup" id="Q4QR71">
    <property type="interactions" value="22"/>
</dbReference>
<dbReference type="STRING" id="10116.ENSRNOP00000070651"/>
<dbReference type="ESTHER" id="ratno-CPVL">
    <property type="family name" value="Carboxypeptidase_S10"/>
</dbReference>
<dbReference type="MEROPS" id="S10.003"/>
<dbReference type="GlyCosmos" id="Q4QR71">
    <property type="glycosylation" value="4 sites, No reported glycans"/>
</dbReference>
<dbReference type="GlyGen" id="Q4QR71">
    <property type="glycosylation" value="4 sites"/>
</dbReference>
<dbReference type="PhosphoSitePlus" id="Q4QR71"/>
<dbReference type="PaxDb" id="10116-ENSRNOP00000012196"/>
<dbReference type="Ensembl" id="ENSRNOT00000012196.6">
    <property type="protein sequence ID" value="ENSRNOP00000012196.5"/>
    <property type="gene ID" value="ENSRNOG00000009172.7"/>
</dbReference>
<dbReference type="GeneID" id="502774"/>
<dbReference type="KEGG" id="rno:502774"/>
<dbReference type="UCSC" id="RGD:1563609">
    <property type="organism name" value="rat"/>
</dbReference>
<dbReference type="AGR" id="RGD:1563609"/>
<dbReference type="CTD" id="54504"/>
<dbReference type="RGD" id="1563609">
    <property type="gene designation" value="Cpvl"/>
</dbReference>
<dbReference type="eggNOG" id="KOG1282">
    <property type="taxonomic scope" value="Eukaryota"/>
</dbReference>
<dbReference type="GeneTree" id="ENSGT00940000159498"/>
<dbReference type="InParanoid" id="Q4QR71"/>
<dbReference type="OMA" id="EMADQFV"/>
<dbReference type="OrthoDB" id="443318at2759"/>
<dbReference type="PhylomeDB" id="Q4QR71"/>
<dbReference type="TreeFam" id="TF354323"/>
<dbReference type="PRO" id="PR:Q4QR71"/>
<dbReference type="Proteomes" id="UP000002494">
    <property type="component" value="Chromosome 4"/>
</dbReference>
<dbReference type="Bgee" id="ENSRNOG00000009172">
    <property type="expression patterns" value="Expressed in testis and 6 other cell types or tissues"/>
</dbReference>
<dbReference type="GO" id="GO:0004185">
    <property type="term" value="F:serine-type carboxypeptidase activity"/>
    <property type="evidence" value="ECO:0000318"/>
    <property type="project" value="GO_Central"/>
</dbReference>
<dbReference type="GO" id="GO:0006508">
    <property type="term" value="P:proteolysis"/>
    <property type="evidence" value="ECO:0007669"/>
    <property type="project" value="UniProtKB-KW"/>
</dbReference>
<dbReference type="FunFam" id="3.40.50.1820:FF:000096">
    <property type="entry name" value="Carboxypeptidase vitellogenic-like"/>
    <property type="match status" value="1"/>
</dbReference>
<dbReference type="Gene3D" id="3.40.50.1820">
    <property type="entry name" value="alpha/beta hydrolase"/>
    <property type="match status" value="1"/>
</dbReference>
<dbReference type="InterPro" id="IPR029058">
    <property type="entry name" value="AB_hydrolase_fold"/>
</dbReference>
<dbReference type="InterPro" id="IPR001563">
    <property type="entry name" value="Peptidase_S10"/>
</dbReference>
<dbReference type="InterPro" id="IPR018202">
    <property type="entry name" value="Ser_caboxypep_ser_AS"/>
</dbReference>
<dbReference type="PANTHER" id="PTHR11802:SF472">
    <property type="entry name" value="SERINE CARBOXYPEPTIDASE CPVL-RELATED"/>
    <property type="match status" value="1"/>
</dbReference>
<dbReference type="PANTHER" id="PTHR11802">
    <property type="entry name" value="SERINE PROTEASE FAMILY S10 SERINE CARBOXYPEPTIDASE"/>
    <property type="match status" value="1"/>
</dbReference>
<dbReference type="Pfam" id="PF00450">
    <property type="entry name" value="Peptidase_S10"/>
    <property type="match status" value="1"/>
</dbReference>
<dbReference type="PRINTS" id="PR00724">
    <property type="entry name" value="CRBOXYPTASEC"/>
</dbReference>
<dbReference type="SUPFAM" id="SSF53474">
    <property type="entry name" value="alpha/beta-Hydrolases"/>
    <property type="match status" value="1"/>
</dbReference>
<dbReference type="PROSITE" id="PS00131">
    <property type="entry name" value="CARBOXYPEPT_SER_SER"/>
    <property type="match status" value="1"/>
</dbReference>
<sequence length="478" mass="55146">MVRAQWKVIILLILLMVIPSDGLFHSIYRSILVAQPFKGNAGQPLFLSPYIRTGKIKEGQRKSMVSPFPGMYDKSYAGYITVNQTYNSNLFFWFFPARTQPADAPVVLWLQGGPGGSSMFGLFVEHGPYIITSNMTVLSRDFPWTFSLSMLYIDNPVGTGFSFTDHIQGYAIDEDDVAQDLYSALVQFFKLFPEYAKNDFYITGESYAGKYVPAIAYYIHSLNPVRRFKIRLKGIALGDAYTDPETIIGGYATFLYEVGLLDEQQRRHFRKQCRKCIKYIKEQEWMKAFEVLDELLDGDLTAGPSFFQNVTGCTNYYNILQCTEPEDQSYFSKFLSLPQVRQAIHVGNRNFSDGAEVEKYLREDTVKSVKPWLAEIMNYYKVLIYNGQLDIIVAAALTERSLMTMDWKGSYAYRRTHKKIWKIFESDDEVAGYVRRVGKFHQVIVRGGGHILPYDQPLRSFDMINRFIYDRGWEPYKL</sequence>
<evidence type="ECO:0000250" key="1"/>
<evidence type="ECO:0000255" key="2"/>
<evidence type="ECO:0000255" key="3">
    <source>
        <dbReference type="PROSITE-ProRule" id="PRU10074"/>
    </source>
</evidence>
<evidence type="ECO:0000305" key="4"/>
<comment type="function">
    <text evidence="1">May be involved in the digestion of phagocytosed particles in the lysosome, participation in an inflammatory protease cascade, and trimming of peptides for antigen presentation.</text>
</comment>
<comment type="similarity">
    <text evidence="4">Belongs to the peptidase S10 family.</text>
</comment>
<protein>
    <recommendedName>
        <fullName>Probable serine carboxypeptidase CPVL</fullName>
        <ecNumber>3.4.16.-</ecNumber>
    </recommendedName>
</protein>
<accession>Q4QR71</accession>
<keyword id="KW-0121">Carboxypeptidase</keyword>
<keyword id="KW-0325">Glycoprotein</keyword>
<keyword id="KW-0378">Hydrolase</keyword>
<keyword id="KW-0645">Protease</keyword>
<keyword id="KW-1185">Reference proteome</keyword>
<keyword id="KW-0732">Signal</keyword>
<keyword id="KW-0865">Zymogen</keyword>
<name>CPVL_RAT</name>